<proteinExistence type="inferred from homology"/>
<comment type="function">
    <text evidence="1">Specifically methylates the cytosine at position 967 (m5C967) of 16S rRNA.</text>
</comment>
<comment type="catalytic activity">
    <reaction evidence="1">
        <text>cytidine(967) in 16S rRNA + S-adenosyl-L-methionine = 5-methylcytidine(967) in 16S rRNA + S-adenosyl-L-homocysteine + H(+)</text>
        <dbReference type="Rhea" id="RHEA:42748"/>
        <dbReference type="Rhea" id="RHEA-COMP:10219"/>
        <dbReference type="Rhea" id="RHEA-COMP:10220"/>
        <dbReference type="ChEBI" id="CHEBI:15378"/>
        <dbReference type="ChEBI" id="CHEBI:57856"/>
        <dbReference type="ChEBI" id="CHEBI:59789"/>
        <dbReference type="ChEBI" id="CHEBI:74483"/>
        <dbReference type="ChEBI" id="CHEBI:82748"/>
        <dbReference type="EC" id="2.1.1.176"/>
    </reaction>
</comment>
<comment type="subcellular location">
    <subcellularLocation>
        <location evidence="1">Cytoplasm</location>
    </subcellularLocation>
</comment>
<comment type="similarity">
    <text evidence="1">Belongs to the class I-like SAM-binding methyltransferase superfamily. RsmB/NOP family.</text>
</comment>
<reference key="1">
    <citation type="journal article" date="2009" name="PLoS Genet.">
        <title>Organised genome dynamics in the Escherichia coli species results in highly diverse adaptive paths.</title>
        <authorList>
            <person name="Touchon M."/>
            <person name="Hoede C."/>
            <person name="Tenaillon O."/>
            <person name="Barbe V."/>
            <person name="Baeriswyl S."/>
            <person name="Bidet P."/>
            <person name="Bingen E."/>
            <person name="Bonacorsi S."/>
            <person name="Bouchier C."/>
            <person name="Bouvet O."/>
            <person name="Calteau A."/>
            <person name="Chiapello H."/>
            <person name="Clermont O."/>
            <person name="Cruveiller S."/>
            <person name="Danchin A."/>
            <person name="Diard M."/>
            <person name="Dossat C."/>
            <person name="Karoui M.E."/>
            <person name="Frapy E."/>
            <person name="Garry L."/>
            <person name="Ghigo J.M."/>
            <person name="Gilles A.M."/>
            <person name="Johnson J."/>
            <person name="Le Bouguenec C."/>
            <person name="Lescat M."/>
            <person name="Mangenot S."/>
            <person name="Martinez-Jehanne V."/>
            <person name="Matic I."/>
            <person name="Nassif X."/>
            <person name="Oztas S."/>
            <person name="Petit M.A."/>
            <person name="Pichon C."/>
            <person name="Rouy Z."/>
            <person name="Ruf C.S."/>
            <person name="Schneider D."/>
            <person name="Tourret J."/>
            <person name="Vacherie B."/>
            <person name="Vallenet D."/>
            <person name="Medigue C."/>
            <person name="Rocha E.P.C."/>
            <person name="Denamur E."/>
        </authorList>
    </citation>
    <scope>NUCLEOTIDE SEQUENCE [LARGE SCALE GENOMIC DNA]</scope>
    <source>
        <strain>ATCC 35469 / DSM 13698 / BCRC 15582 / CCUG 18766 / IAM 14443 / JCM 21226 / LMG 7866 / NBRC 102419 / NCTC 12128 / CDC 0568-73</strain>
    </source>
</reference>
<feature type="chain" id="PRO_1000188696" description="Ribosomal RNA small subunit methyltransferase B">
    <location>
        <begin position="1"/>
        <end position="429"/>
    </location>
</feature>
<feature type="active site" description="Nucleophile" evidence="1">
    <location>
        <position position="375"/>
    </location>
</feature>
<feature type="binding site" evidence="1">
    <location>
        <begin position="254"/>
        <end position="260"/>
    </location>
    <ligand>
        <name>S-adenosyl-L-methionine</name>
        <dbReference type="ChEBI" id="CHEBI:59789"/>
    </ligand>
</feature>
<feature type="binding site" evidence="1">
    <location>
        <position position="277"/>
    </location>
    <ligand>
        <name>S-adenosyl-L-methionine</name>
        <dbReference type="ChEBI" id="CHEBI:59789"/>
    </ligand>
</feature>
<feature type="binding site" evidence="1">
    <location>
        <position position="303"/>
    </location>
    <ligand>
        <name>S-adenosyl-L-methionine</name>
        <dbReference type="ChEBI" id="CHEBI:59789"/>
    </ligand>
</feature>
<feature type="binding site" evidence="1">
    <location>
        <position position="322"/>
    </location>
    <ligand>
        <name>S-adenosyl-L-methionine</name>
        <dbReference type="ChEBI" id="CHEBI:59789"/>
    </ligand>
</feature>
<evidence type="ECO:0000255" key="1">
    <source>
        <dbReference type="HAMAP-Rule" id="MF_01856"/>
    </source>
</evidence>
<accession>B7LRQ5</accession>
<organism>
    <name type="scientific">Escherichia fergusonii (strain ATCC 35469 / DSM 13698 / CCUG 18766 / IAM 14443 / JCM 21226 / LMG 7866 / NBRC 102419 / NCTC 12128 / CDC 0568-73)</name>
    <dbReference type="NCBI Taxonomy" id="585054"/>
    <lineage>
        <taxon>Bacteria</taxon>
        <taxon>Pseudomonadati</taxon>
        <taxon>Pseudomonadota</taxon>
        <taxon>Gammaproteobacteria</taxon>
        <taxon>Enterobacterales</taxon>
        <taxon>Enterobacteriaceae</taxon>
        <taxon>Escherichia</taxon>
    </lineage>
</organism>
<sequence length="429" mass="48358">MKKQRNLRSMAAQAVEQVVEQGQSLSNILPPLQQKVSDKDKALLQELCFGVLRTLSQLDWLINKLMARPMTGKQRTVHYLIMVGLYQLLYTRIPPHAALAETVEGAVAIKRPQLKGLINGVLRQFQRQQEELLAEFNASDARYLHPSWLLKRLQKAYPEQWQSIIEANNQRPPMWLRVNRTHHSRDSWLALLDEAGMKGFPHADYPDAVRLETPAPVHVLPGFEEGWVTVQDASAQGCMAWLAPQNGEHILDLCAAPGGKTTHILEVAPEAQVVAVDIDEQRLSRVYDNLKRLGMKATVKQGDGRYPSQWCGEQQFDRILLDAPCSATGVIRRHPDIKWLRRDRDIPELAQLQSEILDAIWPHLKSGGILIYATCSVLPEENSLQIKAFLQRTADAELCETGTPEQPGKQNLPGAEEGDGFFYAKLIKK</sequence>
<keyword id="KW-0963">Cytoplasm</keyword>
<keyword id="KW-0489">Methyltransferase</keyword>
<keyword id="KW-0694">RNA-binding</keyword>
<keyword id="KW-0698">rRNA processing</keyword>
<keyword id="KW-0949">S-adenosyl-L-methionine</keyword>
<keyword id="KW-0808">Transferase</keyword>
<name>RSMB_ESCF3</name>
<dbReference type="EC" id="2.1.1.176" evidence="1"/>
<dbReference type="EMBL" id="CU928158">
    <property type="protein sequence ID" value="CAQ90752.1"/>
    <property type="molecule type" value="Genomic_DNA"/>
</dbReference>
<dbReference type="RefSeq" id="WP_002431756.1">
    <property type="nucleotide sequence ID" value="NC_011740.1"/>
</dbReference>
<dbReference type="SMR" id="B7LRQ5"/>
<dbReference type="GeneID" id="75060118"/>
<dbReference type="KEGG" id="efe:EFER_3272"/>
<dbReference type="HOGENOM" id="CLU_005316_0_4_6"/>
<dbReference type="OrthoDB" id="9810297at2"/>
<dbReference type="Proteomes" id="UP000000745">
    <property type="component" value="Chromosome"/>
</dbReference>
<dbReference type="GO" id="GO:0005829">
    <property type="term" value="C:cytosol"/>
    <property type="evidence" value="ECO:0007669"/>
    <property type="project" value="TreeGrafter"/>
</dbReference>
<dbReference type="GO" id="GO:0003723">
    <property type="term" value="F:RNA binding"/>
    <property type="evidence" value="ECO:0007669"/>
    <property type="project" value="UniProtKB-KW"/>
</dbReference>
<dbReference type="GO" id="GO:0009383">
    <property type="term" value="F:rRNA (cytosine-C5-)-methyltransferase activity"/>
    <property type="evidence" value="ECO:0007669"/>
    <property type="project" value="TreeGrafter"/>
</dbReference>
<dbReference type="GO" id="GO:0006355">
    <property type="term" value="P:regulation of DNA-templated transcription"/>
    <property type="evidence" value="ECO:0007669"/>
    <property type="project" value="InterPro"/>
</dbReference>
<dbReference type="GO" id="GO:0070475">
    <property type="term" value="P:rRNA base methylation"/>
    <property type="evidence" value="ECO:0007669"/>
    <property type="project" value="TreeGrafter"/>
</dbReference>
<dbReference type="CDD" id="cd02440">
    <property type="entry name" value="AdoMet_MTases"/>
    <property type="match status" value="1"/>
</dbReference>
<dbReference type="CDD" id="cd00620">
    <property type="entry name" value="Methyltransferase_Sun"/>
    <property type="match status" value="1"/>
</dbReference>
<dbReference type="FunFam" id="1.10.287.730:FF:000001">
    <property type="entry name" value="Ribosomal RNA small subunit methyltransferase B"/>
    <property type="match status" value="1"/>
</dbReference>
<dbReference type="FunFam" id="1.10.940.10:FF:000002">
    <property type="entry name" value="Ribosomal RNA small subunit methyltransferase B"/>
    <property type="match status" value="1"/>
</dbReference>
<dbReference type="FunFam" id="3.30.70.1170:FF:000002">
    <property type="entry name" value="Ribosomal RNA small subunit methyltransferase B"/>
    <property type="match status" value="1"/>
</dbReference>
<dbReference type="FunFam" id="3.40.50.150:FF:000022">
    <property type="entry name" value="Ribosomal RNA small subunit methyltransferase B"/>
    <property type="match status" value="1"/>
</dbReference>
<dbReference type="Gene3D" id="1.10.287.730">
    <property type="entry name" value="Helix hairpin bin"/>
    <property type="match status" value="1"/>
</dbReference>
<dbReference type="Gene3D" id="1.10.940.10">
    <property type="entry name" value="NusB-like"/>
    <property type="match status" value="1"/>
</dbReference>
<dbReference type="Gene3D" id="3.30.70.1170">
    <property type="entry name" value="Sun protein, domain 3"/>
    <property type="match status" value="1"/>
</dbReference>
<dbReference type="Gene3D" id="3.40.50.150">
    <property type="entry name" value="Vaccinia Virus protein VP39"/>
    <property type="match status" value="1"/>
</dbReference>
<dbReference type="HAMAP" id="MF_01856">
    <property type="entry name" value="16SrRNA_methyltr_B"/>
    <property type="match status" value="1"/>
</dbReference>
<dbReference type="InterPro" id="IPR049560">
    <property type="entry name" value="MeTrfase_RsmB-F_NOP2_cat"/>
</dbReference>
<dbReference type="InterPro" id="IPR001678">
    <property type="entry name" value="MeTrfase_RsmB-F_NOP2_dom"/>
</dbReference>
<dbReference type="InterPro" id="IPR035926">
    <property type="entry name" value="NusB-like_sf"/>
</dbReference>
<dbReference type="InterPro" id="IPR006027">
    <property type="entry name" value="NusB_RsmB_TIM44"/>
</dbReference>
<dbReference type="InterPro" id="IPR023267">
    <property type="entry name" value="RCMT"/>
</dbReference>
<dbReference type="InterPro" id="IPR004573">
    <property type="entry name" value="rRNA_ssu_MeTfrase_B"/>
</dbReference>
<dbReference type="InterPro" id="IPR023541">
    <property type="entry name" value="rRNA_ssu_MeTfrase_B_ent"/>
</dbReference>
<dbReference type="InterPro" id="IPR054728">
    <property type="entry name" value="RsmB-like_ferredoxin"/>
</dbReference>
<dbReference type="InterPro" id="IPR048019">
    <property type="entry name" value="RsmB-like_N"/>
</dbReference>
<dbReference type="InterPro" id="IPR018314">
    <property type="entry name" value="RsmB/NOL1/NOP2-like_CS"/>
</dbReference>
<dbReference type="InterPro" id="IPR029063">
    <property type="entry name" value="SAM-dependent_MTases_sf"/>
</dbReference>
<dbReference type="NCBIfam" id="NF008149">
    <property type="entry name" value="PRK10901.1"/>
    <property type="match status" value="1"/>
</dbReference>
<dbReference type="NCBIfam" id="NF011494">
    <property type="entry name" value="PRK14902.1"/>
    <property type="match status" value="1"/>
</dbReference>
<dbReference type="NCBIfam" id="TIGR00563">
    <property type="entry name" value="rsmB"/>
    <property type="match status" value="1"/>
</dbReference>
<dbReference type="PANTHER" id="PTHR22807:SF61">
    <property type="entry name" value="NOL1_NOP2_SUN FAMILY PROTEIN _ ANTITERMINATION NUSB DOMAIN-CONTAINING PROTEIN"/>
    <property type="match status" value="1"/>
</dbReference>
<dbReference type="PANTHER" id="PTHR22807">
    <property type="entry name" value="NOP2 YEAST -RELATED NOL1/NOP2/FMU SUN DOMAIN-CONTAINING"/>
    <property type="match status" value="1"/>
</dbReference>
<dbReference type="Pfam" id="PF01189">
    <property type="entry name" value="Methyltr_RsmB-F"/>
    <property type="match status" value="1"/>
</dbReference>
<dbReference type="Pfam" id="PF01029">
    <property type="entry name" value="NusB"/>
    <property type="match status" value="1"/>
</dbReference>
<dbReference type="Pfam" id="PF22458">
    <property type="entry name" value="RsmF-B_ferredox"/>
    <property type="match status" value="1"/>
</dbReference>
<dbReference type="PRINTS" id="PR02008">
    <property type="entry name" value="RCMTFAMILY"/>
</dbReference>
<dbReference type="SUPFAM" id="SSF48013">
    <property type="entry name" value="NusB-like"/>
    <property type="match status" value="1"/>
</dbReference>
<dbReference type="SUPFAM" id="SSF53335">
    <property type="entry name" value="S-adenosyl-L-methionine-dependent methyltransferases"/>
    <property type="match status" value="1"/>
</dbReference>
<dbReference type="PROSITE" id="PS01153">
    <property type="entry name" value="NOL1_NOP2_SUN"/>
    <property type="match status" value="1"/>
</dbReference>
<dbReference type="PROSITE" id="PS51686">
    <property type="entry name" value="SAM_MT_RSMB_NOP"/>
    <property type="match status" value="1"/>
</dbReference>
<protein>
    <recommendedName>
        <fullName evidence="1">Ribosomal RNA small subunit methyltransferase B</fullName>
        <ecNumber evidence="1">2.1.1.176</ecNumber>
    </recommendedName>
    <alternativeName>
        <fullName evidence="1">16S rRNA m5C967 methyltransferase</fullName>
    </alternativeName>
    <alternativeName>
        <fullName evidence="1">rRNA (cytosine-C(5)-)-methyltransferase RsmB</fullName>
    </alternativeName>
</protein>
<gene>
    <name evidence="1" type="primary">rsmB</name>
    <name evidence="1" type="synonym">sun</name>
    <name type="ordered locus">EFER_3272</name>
</gene>